<name>AACUO_ASPA1</name>
<dbReference type="EC" id="1.-.-.-" evidence="9"/>
<dbReference type="EMBL" id="KV878984">
    <property type="protein sequence ID" value="OJJ96969.1"/>
    <property type="molecule type" value="Genomic_DNA"/>
</dbReference>
<dbReference type="RefSeq" id="XP_020053309.1">
    <property type="nucleotide sequence ID" value="XM_020201795.1"/>
</dbReference>
<dbReference type="SMR" id="A0A1L9WLD2"/>
<dbReference type="STRING" id="690307.A0A1L9WLD2"/>
<dbReference type="GeneID" id="30975609"/>
<dbReference type="VEuPathDB" id="FungiDB:ASPACDRAFT_46494"/>
<dbReference type="OMA" id="WTNEYAI"/>
<dbReference type="OrthoDB" id="3758478at2759"/>
<dbReference type="Proteomes" id="UP000184546">
    <property type="component" value="Unassembled WGS sequence"/>
</dbReference>
<dbReference type="GO" id="GO:0004497">
    <property type="term" value="F:monooxygenase activity"/>
    <property type="evidence" value="ECO:0007669"/>
    <property type="project" value="UniProtKB-KW"/>
</dbReference>
<dbReference type="Gene3D" id="3.10.450.50">
    <property type="match status" value="1"/>
</dbReference>
<dbReference type="InterPro" id="IPR050977">
    <property type="entry name" value="Fungal_Meroterpenoid_Isomerase"/>
</dbReference>
<dbReference type="InterPro" id="IPR032710">
    <property type="entry name" value="NTF2-like_dom_sf"/>
</dbReference>
<dbReference type="InterPro" id="IPR037401">
    <property type="entry name" value="SnoaL-like"/>
</dbReference>
<dbReference type="PANTHER" id="PTHR39598:SF1">
    <property type="entry name" value="AUSTINOID BIOSYNTHESIS CLUSTERS PROTEIN F-RELATED"/>
    <property type="match status" value="1"/>
</dbReference>
<dbReference type="PANTHER" id="PTHR39598">
    <property type="entry name" value="AUSTINOL SYNTHESIS PROTEIN F-RELATED"/>
    <property type="match status" value="1"/>
</dbReference>
<dbReference type="Pfam" id="PF12680">
    <property type="entry name" value="SnoaL_2"/>
    <property type="match status" value="1"/>
</dbReference>
<dbReference type="SUPFAM" id="SSF54427">
    <property type="entry name" value="NTF2-like"/>
    <property type="match status" value="1"/>
</dbReference>
<evidence type="ECO:0000269" key="1">
    <source>
    </source>
</evidence>
<evidence type="ECO:0000269" key="2">
    <source>
    </source>
</evidence>
<evidence type="ECO:0000269" key="3">
    <source>
    </source>
</evidence>
<evidence type="ECO:0000269" key="4">
    <source>
    </source>
</evidence>
<evidence type="ECO:0000269" key="5">
    <source>
    </source>
</evidence>
<evidence type="ECO:0000269" key="6">
    <source>
    </source>
</evidence>
<evidence type="ECO:0000303" key="7">
    <source>
    </source>
</evidence>
<evidence type="ECO:0000305" key="8"/>
<evidence type="ECO:0000305" key="9">
    <source>
    </source>
</evidence>
<evidence type="ECO:0000305" key="10">
    <source>
    </source>
</evidence>
<comment type="function">
    <text evidence="4 6 10">Monooxygenase; part of the gene cluster that mediates the biosynthesis of the tetrahydroxanthone dimer secalonic acid D (PubMed:30996871, PubMed:33891392). The pathway begins with the synthesis of atrochrysone thioester by the polyketide synthase AacuL (Probable). The atrochrysone carboxyl ACP thioesterase AacuM then breaks the thioester bond and releases the atrochrysone carboxylic acid from AacuL (Probable). Atrochrysone carboxylic acid is decarboxylated by the decarboxylase AacuI, and oxidized by the anthrone oxygenase AacuG to yield emodin (Probable). Emodin is then reduced to emodin hydroquinone by a yet unidentified oxidoreductase (Probable). A-ring reduction by the short chain dehydrogenase AacuN, dehydration by the scytalone dehydratase-like protein AacuK and probable spontaneous re-oxidation, results in overall deoxygenation to chrysophanol (PubMed:33891392). Baeyer-Villiger oxidation by the Baeyer-Villiger monooxygenase (BVMO) AacuH then yields monodictyphenone (PubMed:33891392). Monodictyphenone is transformed into compounds with the tetrahydroxanthone skeleton via methylesterification by the methyltransferase AacuQ, followed by the action of the flavin-dependent monooxygenase AacuC, the isomerase AacuP, and the short chain dehydrogenase/reductase AacuF or AacuD (PubMed:33891392). AacuF and AacuD should accept the same compound as a substrate but perform the ketoreduction with a different stereoselectivity, thus yielding blennolides B and A, respectively (PubMed:33891392). In the final step of the biosynthesis, the cytochrome P450 monooxygenase AacuE accepts blennolide B and/or blennolide A to conduct the dimerization reaction to furnish the tetrahydroxanthone dimers, secalonic acids D, B, and F (PubMed:33891392).</text>
</comment>
<comment type="pathway">
    <text evidence="9">Secondary metabolite biosynthesis.</text>
</comment>
<comment type="biotechnology">
    <text evidence="1 2 3 5">Secalonic acids show unprecedented anticancer activities against various human cancer cells and might be interesting for further derivatization, targeting diseases such as cancer.</text>
</comment>
<comment type="similarity">
    <text evidence="8">Belongs to the avfA family.</text>
</comment>
<protein>
    <recommendedName>
        <fullName evidence="7">Monooxygenase AacuO</fullName>
        <ecNumber evidence="9">1.-.-.-</ecNumber>
    </recommendedName>
    <alternativeName>
        <fullName evidence="7">Secalonic acid biosynthesis cluster protein O</fullName>
    </alternativeName>
</protein>
<sequence length="160" mass="17724">MTAPASTQAATLKRFISAWEKWDAQEWISTFSDDFQQVTLPHSLSVPVRTRKEVEIVLPALVATVKSYQLQIHHVIHDPDNNKAVVYAASTGKLPWGDWNLEYAAFLTFTDDGGKVARLEEMLDTAFLQDFGPKFGKYLEENGGPVAVAAGGKQDLRSEA</sequence>
<accession>A0A1L9WLD2</accession>
<organism>
    <name type="scientific">Aspergillus aculeatus (strain ATCC 16872 / CBS 172.66 / WB 5094)</name>
    <dbReference type="NCBI Taxonomy" id="690307"/>
    <lineage>
        <taxon>Eukaryota</taxon>
        <taxon>Fungi</taxon>
        <taxon>Dikarya</taxon>
        <taxon>Ascomycota</taxon>
        <taxon>Pezizomycotina</taxon>
        <taxon>Eurotiomycetes</taxon>
        <taxon>Eurotiomycetidae</taxon>
        <taxon>Eurotiales</taxon>
        <taxon>Aspergillaceae</taxon>
        <taxon>Aspergillus</taxon>
        <taxon>Aspergillus subgen. Circumdati</taxon>
    </lineage>
</organism>
<proteinExistence type="evidence at protein level"/>
<reference key="1">
    <citation type="journal article" date="2017" name="Genome Biol.">
        <title>Comparative genomics reveals high biological diversity and specific adaptations in the industrially and medically important fungal genus Aspergillus.</title>
        <authorList>
            <person name="de Vries R.P."/>
            <person name="Riley R."/>
            <person name="Wiebenga A."/>
            <person name="Aguilar-Osorio G."/>
            <person name="Amillis S."/>
            <person name="Uchima C.A."/>
            <person name="Anderluh G."/>
            <person name="Asadollahi M."/>
            <person name="Askin M."/>
            <person name="Barry K."/>
            <person name="Battaglia E."/>
            <person name="Bayram O."/>
            <person name="Benocci T."/>
            <person name="Braus-Stromeyer S.A."/>
            <person name="Caldana C."/>
            <person name="Canovas D."/>
            <person name="Cerqueira G.C."/>
            <person name="Chen F."/>
            <person name="Chen W."/>
            <person name="Choi C."/>
            <person name="Clum A."/>
            <person name="Dos Santos R.A."/>
            <person name="Damasio A.R."/>
            <person name="Diallinas G."/>
            <person name="Emri T."/>
            <person name="Fekete E."/>
            <person name="Flipphi M."/>
            <person name="Freyberg S."/>
            <person name="Gallo A."/>
            <person name="Gournas C."/>
            <person name="Habgood R."/>
            <person name="Hainaut M."/>
            <person name="Harispe M.L."/>
            <person name="Henrissat B."/>
            <person name="Hilden K.S."/>
            <person name="Hope R."/>
            <person name="Hossain A."/>
            <person name="Karabika E."/>
            <person name="Karaffa L."/>
            <person name="Karanyi Z."/>
            <person name="Krasevec N."/>
            <person name="Kuo A."/>
            <person name="Kusch H."/>
            <person name="LaButti K."/>
            <person name="Lagendijk E.L."/>
            <person name="Lapidus A."/>
            <person name="Levasseur A."/>
            <person name="Lindquist E."/>
            <person name="Lipzen A."/>
            <person name="Logrieco A.F."/>
            <person name="MacCabe A."/>
            <person name="Maekelae M.R."/>
            <person name="Malavazi I."/>
            <person name="Melin P."/>
            <person name="Meyer V."/>
            <person name="Mielnichuk N."/>
            <person name="Miskei M."/>
            <person name="Molnar A.P."/>
            <person name="Mule G."/>
            <person name="Ngan C.Y."/>
            <person name="Orejas M."/>
            <person name="Orosz E."/>
            <person name="Ouedraogo J.P."/>
            <person name="Overkamp K.M."/>
            <person name="Park H.-S."/>
            <person name="Perrone G."/>
            <person name="Piumi F."/>
            <person name="Punt P.J."/>
            <person name="Ram A.F."/>
            <person name="Ramon A."/>
            <person name="Rauscher S."/>
            <person name="Record E."/>
            <person name="Riano-Pachon D.M."/>
            <person name="Robert V."/>
            <person name="Roehrig J."/>
            <person name="Ruller R."/>
            <person name="Salamov A."/>
            <person name="Salih N.S."/>
            <person name="Samson R.A."/>
            <person name="Sandor E."/>
            <person name="Sanguinetti M."/>
            <person name="Schuetze T."/>
            <person name="Sepcic K."/>
            <person name="Shelest E."/>
            <person name="Sherlock G."/>
            <person name="Sophianopoulou V."/>
            <person name="Squina F.M."/>
            <person name="Sun H."/>
            <person name="Susca A."/>
            <person name="Todd R.B."/>
            <person name="Tsang A."/>
            <person name="Unkles S.E."/>
            <person name="van de Wiele N."/>
            <person name="van Rossen-Uffink D."/>
            <person name="Oliveira J.V."/>
            <person name="Vesth T.C."/>
            <person name="Visser J."/>
            <person name="Yu J.-H."/>
            <person name="Zhou M."/>
            <person name="Andersen M.R."/>
            <person name="Archer D.B."/>
            <person name="Baker S.E."/>
            <person name="Benoit I."/>
            <person name="Brakhage A.A."/>
            <person name="Braus G.H."/>
            <person name="Fischer R."/>
            <person name="Frisvad J.C."/>
            <person name="Goldman G.H."/>
            <person name="Houbraken J."/>
            <person name="Oakley B."/>
            <person name="Pocsi I."/>
            <person name="Scazzocchio C."/>
            <person name="Seiboth B."/>
            <person name="vanKuyk P.A."/>
            <person name="Wortman J."/>
            <person name="Dyer P.S."/>
            <person name="Grigoriev I.V."/>
        </authorList>
    </citation>
    <scope>NUCLEOTIDE SEQUENCE [LARGE SCALE GENOMIC DNA]</scope>
    <source>
        <strain>ATCC 16872 / CBS 172.66 / WB 5094</strain>
    </source>
</reference>
<reference key="2">
    <citation type="journal article" date="2017" name="Neoplasma">
        <title>Secalonic acid- F inhibited cell growth more effectively than 5-fluorouracil on hepatocellular carcinoma in vitro and in vivo.</title>
        <authorList>
            <person name="Gao X."/>
            <person name="Sun H.L."/>
            <person name="Liu D.S."/>
            <person name="Zhang J.R."/>
            <person name="Zhang J."/>
            <person name="Yan M.M."/>
            <person name="Pan X.H."/>
        </authorList>
    </citation>
    <scope>BIOTECHNOLOGY</scope>
</reference>
<reference key="3">
    <citation type="journal article" date="2018" name="Curr. Microbiol.">
        <title>Secondary Metabolites and Their Biological Activity from Aspergillus aculeatus KKU-CT2.</title>
        <authorList>
            <person name="Yodsing N."/>
            <person name="Lekphrom R."/>
            <person name="Sangsopha W."/>
            <person name="Aimi T."/>
            <person name="Boonlue S."/>
        </authorList>
    </citation>
    <scope>BIOTECHNOLOGY</scope>
</reference>
<reference key="4">
    <citation type="journal article" date="2019" name="Chem. Sci.">
        <title>Structure revision of cryptosporioptides and determination of the genetic basis for dimeric xanthone biosynthesis in fungi.</title>
        <authorList>
            <person name="Greco C."/>
            <person name="de Mattos-Shipley K."/>
            <person name="Bailey A.M."/>
            <person name="Mulholland N.P."/>
            <person name="Vincent J.L."/>
            <person name="Willis C.L."/>
            <person name="Cox R.J."/>
            <person name="Simpson T.J."/>
        </authorList>
    </citation>
    <scope>IDENTIFICATION</scope>
    <scope>FUNCTION</scope>
</reference>
<reference key="5">
    <citation type="journal article" date="2019" name="Molecules">
        <title>Secalonic Acid-F, a Novel Mycotoxin, Represses the Progression of Hepatocellular Carcinoma via MARCH1 Regulation of the PI3K/AKT/beta-catenin Signaling Pathway.</title>
        <authorList>
            <person name="Xie L."/>
            <person name="Li M."/>
            <person name="Liu D."/>
            <person name="Wang X."/>
            <person name="Wang P."/>
            <person name="Dai H."/>
            <person name="Yang W."/>
            <person name="Liu W."/>
            <person name="Hu X."/>
            <person name="Zhao M."/>
        </authorList>
    </citation>
    <scope>BIOTECHNOLOGY</scope>
</reference>
<reference key="6">
    <citation type="journal article" date="2020" name="ACS Omega">
        <title>Discovery of a Secalonic Acid Derivative from Aspergillus aculeatus, an Endophyte of Rosa damascena Mill., Triggers Apoptosis in MDA-MB-231 Triple Negative Breast Cancer Cells.</title>
        <authorList>
            <person name="Farooq S."/>
            <person name="Qayum A."/>
            <person name="Nalli Y."/>
            <person name="Lauro G."/>
            <person name="Chini M.G."/>
            <person name="Bifulco G."/>
            <person name="Chaubey A."/>
            <person name="Singh S.K."/>
            <person name="Riyaz-Ul-Hassan S."/>
            <person name="Ali A."/>
        </authorList>
    </citation>
    <scope>BIOTECHNOLOGY</scope>
</reference>
<reference key="7">
    <citation type="journal article" date="2021" name="J. Nat. Prod.">
        <title>Heterologous biosynthesis of tetrahydroxanthone dimers: determination of key factors for selective or divergent synthesis.</title>
        <authorList>
            <person name="Wei X."/>
            <person name="Chen X."/>
            <person name="Chen L."/>
            <person name="Yan D."/>
            <person name="Wang W.G."/>
            <person name="Matsuda Y."/>
        </authorList>
    </citation>
    <scope>FUNCTION</scope>
    <scope>CATALYTIC ACTIVITY</scope>
    <scope>PATHWAY</scope>
</reference>
<feature type="chain" id="PRO_0000453489" description="Monooxygenase AacuO">
    <location>
        <begin position="1"/>
        <end position="160"/>
    </location>
</feature>
<gene>
    <name evidence="7" type="primary">AacuO</name>
    <name type="ORF">ASPACDRAFT_46494</name>
</gene>
<keyword id="KW-0503">Monooxygenase</keyword>
<keyword id="KW-0560">Oxidoreductase</keyword>
<keyword id="KW-1185">Reference proteome</keyword>